<protein>
    <recommendedName>
        <fullName evidence="3">Large ribosomal subunit protein uL15</fullName>
    </recommendedName>
    <alternativeName>
        <fullName>60S ribosomal protein L27a</fullName>
    </alternativeName>
    <alternativeName>
        <fullName>L22</fullName>
    </alternativeName>
</protein>
<dbReference type="EMBL" id="X64207">
    <property type="protein sequence ID" value="CAA45531.1"/>
    <property type="molecule type" value="mRNA"/>
</dbReference>
<dbReference type="PIR" id="S22604">
    <property type="entry name" value="S22604"/>
</dbReference>
<dbReference type="RefSeq" id="NP_001081587.1">
    <property type="nucleotide sequence ID" value="NM_001088118.1"/>
</dbReference>
<dbReference type="SMR" id="P47830"/>
<dbReference type="BioGRID" id="99274">
    <property type="interactions" value="1"/>
</dbReference>
<dbReference type="GeneID" id="397938"/>
<dbReference type="KEGG" id="xla:397938"/>
<dbReference type="AGR" id="Xenbase:XB-GENE-17332474"/>
<dbReference type="CTD" id="397938"/>
<dbReference type="Xenbase" id="XB-GENE-17332474">
    <property type="gene designation" value="rpl27a.S"/>
</dbReference>
<dbReference type="OrthoDB" id="61900at2759"/>
<dbReference type="CD-CODE" id="78E86D56">
    <property type="entry name" value="Mitochondrial cloud"/>
</dbReference>
<dbReference type="Proteomes" id="UP000186698">
    <property type="component" value="Chromosome 7S"/>
</dbReference>
<dbReference type="Bgee" id="397938">
    <property type="expression patterns" value="Expressed in lung and 19 other cell types or tissues"/>
</dbReference>
<dbReference type="GO" id="GO:0022625">
    <property type="term" value="C:cytosolic large ribosomal subunit"/>
    <property type="evidence" value="ECO:0000318"/>
    <property type="project" value="GO_Central"/>
</dbReference>
<dbReference type="GO" id="GO:0003735">
    <property type="term" value="F:structural constituent of ribosome"/>
    <property type="evidence" value="ECO:0000318"/>
    <property type="project" value="GO_Central"/>
</dbReference>
<dbReference type="GO" id="GO:0006412">
    <property type="term" value="P:translation"/>
    <property type="evidence" value="ECO:0007669"/>
    <property type="project" value="InterPro"/>
</dbReference>
<dbReference type="FunFam" id="3.100.10.10:FF:000024">
    <property type="entry name" value="RPL27A isoform 10"/>
    <property type="match status" value="1"/>
</dbReference>
<dbReference type="Gene3D" id="3.100.10.10">
    <property type="match status" value="1"/>
</dbReference>
<dbReference type="Gene3D" id="4.10.990.10">
    <property type="match status" value="1"/>
</dbReference>
<dbReference type="HAMAP" id="MF_01341">
    <property type="entry name" value="Ribosomal_uL15"/>
    <property type="match status" value="1"/>
</dbReference>
<dbReference type="InterPro" id="IPR027386">
    <property type="entry name" value="Rbsml_uL15_N"/>
</dbReference>
<dbReference type="InterPro" id="IPR030878">
    <property type="entry name" value="Ribosomal_uL15"/>
</dbReference>
<dbReference type="InterPro" id="IPR021131">
    <property type="entry name" value="Ribosomal_uL15/eL18"/>
</dbReference>
<dbReference type="InterPro" id="IPR036227">
    <property type="entry name" value="Ribosomal_uL15/eL18_sf"/>
</dbReference>
<dbReference type="InterPro" id="IPR001196">
    <property type="entry name" value="Ribosomal_uL15_CS"/>
</dbReference>
<dbReference type="PANTHER" id="PTHR11721">
    <property type="entry name" value="60S RIBOSOMAL PROTEIN L27A"/>
    <property type="match status" value="1"/>
</dbReference>
<dbReference type="PANTHER" id="PTHR11721:SF3">
    <property type="entry name" value="LARGE RIBOSOMAL SUBUNIT PROTEIN UL15"/>
    <property type="match status" value="1"/>
</dbReference>
<dbReference type="Pfam" id="PF00828">
    <property type="entry name" value="Ribosomal_L27A"/>
    <property type="match status" value="1"/>
</dbReference>
<dbReference type="SUPFAM" id="SSF52080">
    <property type="entry name" value="Ribosomal proteins L15p and L18e"/>
    <property type="match status" value="1"/>
</dbReference>
<dbReference type="PROSITE" id="PS00475">
    <property type="entry name" value="RIBOSOMAL_L15"/>
    <property type="match status" value="1"/>
</dbReference>
<comment type="function">
    <text evidence="1">Component of the large ribosomal subunit. The ribosome is a large ribonucleoprotein complex responsible for the synthesis of proteins in the cell.</text>
</comment>
<comment type="subunit">
    <text evidence="1">Component of the large ribosomal subunit.</text>
</comment>
<comment type="subcellular location">
    <subcellularLocation>
        <location evidence="1">Cytoplasm</location>
    </subcellularLocation>
</comment>
<comment type="similarity">
    <text evidence="3">Belongs to the universal ribosomal protein uL15 family.</text>
</comment>
<keyword id="KW-0963">Cytoplasm</keyword>
<keyword id="KW-1185">Reference proteome</keyword>
<keyword id="KW-0687">Ribonucleoprotein</keyword>
<keyword id="KW-0689">Ribosomal protein</keyword>
<proteinExistence type="evidence at transcript level"/>
<gene>
    <name type="primary">rpl27a</name>
    <name type="synonym">rpl22</name>
</gene>
<organism>
    <name type="scientific">Xenopus laevis</name>
    <name type="common">African clawed frog</name>
    <dbReference type="NCBI Taxonomy" id="8355"/>
    <lineage>
        <taxon>Eukaryota</taxon>
        <taxon>Metazoa</taxon>
        <taxon>Chordata</taxon>
        <taxon>Craniata</taxon>
        <taxon>Vertebrata</taxon>
        <taxon>Euteleostomi</taxon>
        <taxon>Amphibia</taxon>
        <taxon>Batrachia</taxon>
        <taxon>Anura</taxon>
        <taxon>Pipoidea</taxon>
        <taxon>Pipidae</taxon>
        <taxon>Xenopodinae</taxon>
        <taxon>Xenopus</taxon>
        <taxon>Xenopus</taxon>
    </lineage>
</organism>
<feature type="chain" id="PRO_0000104885" description="Large ribosomal subunit protein uL15">
    <location>
        <begin position="1"/>
        <end position="148"/>
    </location>
</feature>
<feature type="region of interest" description="Disordered" evidence="2">
    <location>
        <begin position="1"/>
        <end position="38"/>
    </location>
</feature>
<feature type="compositionally biased region" description="Basic residues" evidence="2">
    <location>
        <begin position="1"/>
        <end position="30"/>
    </location>
</feature>
<reference key="1">
    <citation type="journal article" date="1992" name="Nucleic Acids Res.">
        <title>Analysis of mRNAs under translational control during Xenopus embryogenesis: isolation of new ribosomal protein clones.</title>
        <authorList>
            <person name="Loreni F."/>
            <person name="Francesconi A."/>
            <person name="Jappelli R."/>
            <person name="Amaldi F."/>
        </authorList>
    </citation>
    <scope>NUCLEOTIDE SEQUENCE [MRNA]</scope>
</reference>
<accession>P47830</accession>
<name>RL27A_XENLA</name>
<sequence>MPSKLRKTRKLRGHVSHGHGRIGKHRKHPGGRGNAGGMHHHRINFDKYHPGYFGKVGMRHYHLKKNQSFCPTINLDKLWTLVSEQTRLNHAKNLEGPAPIIDAVHAGYYKVLGKGKLPKQPVIVKAKFFSRKAEEKIKSVGGACVLGA</sequence>
<evidence type="ECO:0000250" key="1">
    <source>
        <dbReference type="UniProtKB" id="P46776"/>
    </source>
</evidence>
<evidence type="ECO:0000256" key="2">
    <source>
        <dbReference type="SAM" id="MobiDB-lite"/>
    </source>
</evidence>
<evidence type="ECO:0000305" key="3"/>